<protein>
    <recommendedName>
        <fullName evidence="1">Alkanesulfonate monooxygenase</fullName>
        <ecNumber evidence="1">1.14.14.5</ecNumber>
    </recommendedName>
    <alternativeName>
        <fullName evidence="1">FMNH2-dependent aliphatic sulfonate monooxygenase</fullName>
    </alternativeName>
</protein>
<reference key="1">
    <citation type="journal article" date="2010" name="PLoS ONE">
        <title>The complete genome sequence of Cupriavidus metallidurans strain CH34, a master survivalist in harsh and anthropogenic environments.</title>
        <authorList>
            <person name="Janssen P.J."/>
            <person name="Van Houdt R."/>
            <person name="Moors H."/>
            <person name="Monsieurs P."/>
            <person name="Morin N."/>
            <person name="Michaux A."/>
            <person name="Benotmane M.A."/>
            <person name="Leys N."/>
            <person name="Vallaeys T."/>
            <person name="Lapidus A."/>
            <person name="Monchy S."/>
            <person name="Medigue C."/>
            <person name="Taghavi S."/>
            <person name="McCorkle S."/>
            <person name="Dunn J."/>
            <person name="van der Lelie D."/>
            <person name="Mergeay M."/>
        </authorList>
    </citation>
    <scope>NUCLEOTIDE SEQUENCE [LARGE SCALE GENOMIC DNA]</scope>
    <source>
        <strain>ATCC 43123 / DSM 2839 / NBRC 102507 / CH34</strain>
    </source>
</reference>
<name>SSUD_CUPMC</name>
<proteinExistence type="inferred from homology"/>
<feature type="chain" id="PRO_1000066834" description="Alkanesulfonate monooxygenase">
    <location>
        <begin position="1"/>
        <end position="387"/>
    </location>
</feature>
<organism>
    <name type="scientific">Cupriavidus metallidurans (strain ATCC 43123 / DSM 2839 / NBRC 102507 / CH34)</name>
    <name type="common">Ralstonia metallidurans</name>
    <dbReference type="NCBI Taxonomy" id="266264"/>
    <lineage>
        <taxon>Bacteria</taxon>
        <taxon>Pseudomonadati</taxon>
        <taxon>Pseudomonadota</taxon>
        <taxon>Betaproteobacteria</taxon>
        <taxon>Burkholderiales</taxon>
        <taxon>Burkholderiaceae</taxon>
        <taxon>Cupriavidus</taxon>
    </lineage>
</organism>
<evidence type="ECO:0000255" key="1">
    <source>
        <dbReference type="HAMAP-Rule" id="MF_01229"/>
    </source>
</evidence>
<sequence length="387" mass="41844">MQVLWFIPTHGDSRYLGTSEGAREVSFDYLKQVAVAADTLGYDGVLIPTGRSCEDPWVVASALAAVTRKLRFLVALRPGLMTPTLAARMAATFDRVSNGRLLVNLVTGGDVAELEGDGLFLNHAERYEASAEFIRVWRDLLAASHENGEISFEGKHVTVKGARVLYPPIQRPHPPVYFGGSSEAAHDLAAEQVETYLTWGEPPADVAKKIADVRARAAKHGRTVRFGIRLHVIVRETDAAAWAAADELISKLDDQTVARAQAVFAKMDSEGQRRMAALHAGGTRRTREALEISPNLWAGVGLVRGGAGTALVGDPKTVAARIEEYAALGIDTFVLSGYPHLEEAYRFAELVFPLLPRKVRDKLPGQVLSGPFGEVMATGIVPIASQS</sequence>
<gene>
    <name evidence="1" type="primary">ssuD</name>
    <name type="ordered locus">Rmet_1371</name>
</gene>
<accession>Q1LNM2</accession>
<comment type="function">
    <text evidence="1">Catalyzes the desulfonation of aliphatic sulfonates.</text>
</comment>
<comment type="catalytic activity">
    <reaction evidence="1">
        <text>an alkanesulfonate + FMNH2 + O2 = an aldehyde + FMN + sulfite + H2O + 2 H(+)</text>
        <dbReference type="Rhea" id="RHEA:23064"/>
        <dbReference type="ChEBI" id="CHEBI:15377"/>
        <dbReference type="ChEBI" id="CHEBI:15378"/>
        <dbReference type="ChEBI" id="CHEBI:15379"/>
        <dbReference type="ChEBI" id="CHEBI:17359"/>
        <dbReference type="ChEBI" id="CHEBI:17478"/>
        <dbReference type="ChEBI" id="CHEBI:57618"/>
        <dbReference type="ChEBI" id="CHEBI:58210"/>
        <dbReference type="ChEBI" id="CHEBI:134249"/>
        <dbReference type="EC" id="1.14.14.5"/>
    </reaction>
</comment>
<comment type="similarity">
    <text evidence="1">Belongs to the SsuD family.</text>
</comment>
<dbReference type="EC" id="1.14.14.5" evidence="1"/>
<dbReference type="EMBL" id="CP000352">
    <property type="protein sequence ID" value="ABF08254.1"/>
    <property type="molecule type" value="Genomic_DNA"/>
</dbReference>
<dbReference type="RefSeq" id="WP_011516133.1">
    <property type="nucleotide sequence ID" value="NC_007973.1"/>
</dbReference>
<dbReference type="SMR" id="Q1LNM2"/>
<dbReference type="STRING" id="266264.Rmet_1371"/>
<dbReference type="KEGG" id="rme:Rmet_1371"/>
<dbReference type="eggNOG" id="COG2141">
    <property type="taxonomic scope" value="Bacteria"/>
</dbReference>
<dbReference type="HOGENOM" id="CLU_027853_1_0_4"/>
<dbReference type="Proteomes" id="UP000002429">
    <property type="component" value="Chromosome"/>
</dbReference>
<dbReference type="GO" id="GO:0008726">
    <property type="term" value="F:alkanesulfonate monooxygenase activity"/>
    <property type="evidence" value="ECO:0007669"/>
    <property type="project" value="UniProtKB-UniRule"/>
</dbReference>
<dbReference type="GO" id="GO:0046306">
    <property type="term" value="P:alkanesulfonate catabolic process"/>
    <property type="evidence" value="ECO:0007669"/>
    <property type="project" value="TreeGrafter"/>
</dbReference>
<dbReference type="CDD" id="cd01094">
    <property type="entry name" value="Alkanesulfonate_monoxygenase"/>
    <property type="match status" value="1"/>
</dbReference>
<dbReference type="Gene3D" id="3.20.20.30">
    <property type="entry name" value="Luciferase-like domain"/>
    <property type="match status" value="1"/>
</dbReference>
<dbReference type="HAMAP" id="MF_01229">
    <property type="entry name" value="Alkanesulf_monooxygen"/>
    <property type="match status" value="1"/>
</dbReference>
<dbReference type="InterPro" id="IPR019911">
    <property type="entry name" value="Alkanesulphonate_mOase_FMN-dep"/>
</dbReference>
<dbReference type="InterPro" id="IPR011251">
    <property type="entry name" value="Luciferase-like_dom"/>
</dbReference>
<dbReference type="InterPro" id="IPR036661">
    <property type="entry name" value="Luciferase-like_sf"/>
</dbReference>
<dbReference type="InterPro" id="IPR050172">
    <property type="entry name" value="SsuD_RutA_monooxygenase"/>
</dbReference>
<dbReference type="NCBIfam" id="TIGR03565">
    <property type="entry name" value="alk_sulf_monoox"/>
    <property type="match status" value="1"/>
</dbReference>
<dbReference type="NCBIfam" id="NF001939">
    <property type="entry name" value="PRK00719.1"/>
    <property type="match status" value="1"/>
</dbReference>
<dbReference type="PANTHER" id="PTHR42847">
    <property type="entry name" value="ALKANESULFONATE MONOOXYGENASE"/>
    <property type="match status" value="1"/>
</dbReference>
<dbReference type="PANTHER" id="PTHR42847:SF4">
    <property type="entry name" value="ALKANESULFONATE MONOOXYGENASE-RELATED"/>
    <property type="match status" value="1"/>
</dbReference>
<dbReference type="Pfam" id="PF00296">
    <property type="entry name" value="Bac_luciferase"/>
    <property type="match status" value="1"/>
</dbReference>
<dbReference type="SUPFAM" id="SSF51679">
    <property type="entry name" value="Bacterial luciferase-like"/>
    <property type="match status" value="1"/>
</dbReference>
<keyword id="KW-0285">Flavoprotein</keyword>
<keyword id="KW-0288">FMN</keyword>
<keyword id="KW-0503">Monooxygenase</keyword>
<keyword id="KW-0560">Oxidoreductase</keyword>
<keyword id="KW-1185">Reference proteome</keyword>